<organism>
    <name type="scientific">Aspergillus parasiticus (strain ATCC 56775 / NRRL 5862 / SRRC 143 / SU-1)</name>
    <dbReference type="NCBI Taxonomy" id="1403190"/>
    <lineage>
        <taxon>Eukaryota</taxon>
        <taxon>Fungi</taxon>
        <taxon>Dikarya</taxon>
        <taxon>Ascomycota</taxon>
        <taxon>Pezizomycotina</taxon>
        <taxon>Eurotiomycetes</taxon>
        <taxon>Eurotiomycetidae</taxon>
        <taxon>Eurotiales</taxon>
        <taxon>Aspergillaceae</taxon>
        <taxon>Aspergillus</taxon>
        <taxon>Aspergillus subgen. Circumdati</taxon>
    </lineage>
</organism>
<accession>Q8TGA2</accession>
<accession>A0A0F0HZ47</accession>
<gene>
    <name evidence="10" type="primary">aflA</name>
    <name evidence="11" type="synonym">fas-2</name>
    <name type="synonym">fas-2A</name>
    <name evidence="12" type="synonym">hexA</name>
    <name type="ORF">P875_00052994</name>
</gene>
<feature type="chain" id="PRO_0000438336" description="Fatty acid synthase alpha subunit aflA">
    <location>
        <begin position="1"/>
        <end position="1671"/>
    </location>
</feature>
<feature type="domain" description="Carrier" evidence="3 16">
    <location>
        <begin position="75"/>
        <end position="153"/>
    </location>
</feature>
<feature type="domain" description="Ketosynthase family 3 (KS3)" evidence="4 16">
    <location>
        <begin position="926"/>
        <end position="1428"/>
    </location>
</feature>
<feature type="region of interest" description="Disordered" evidence="6">
    <location>
        <begin position="40"/>
        <end position="60"/>
    </location>
</feature>
<feature type="region of interest" description="Ketoreductase (KR) domain" evidence="2 16">
    <location>
        <begin position="492"/>
        <end position="729"/>
    </location>
</feature>
<feature type="region of interest" description="Disordered" evidence="6">
    <location>
        <begin position="1244"/>
        <end position="1288"/>
    </location>
</feature>
<feature type="region of interest" description="Disordered" evidence="6">
    <location>
        <begin position="1497"/>
        <end position="1521"/>
    </location>
</feature>
<feature type="compositionally biased region" description="Pro residues" evidence="6">
    <location>
        <begin position="47"/>
        <end position="58"/>
    </location>
</feature>
<feature type="compositionally biased region" description="Low complexity" evidence="6">
    <location>
        <begin position="1244"/>
        <end position="1270"/>
    </location>
</feature>
<feature type="active site" description="For beta-ketoacyl synthase activity" evidence="4">
    <location>
        <position position="1113"/>
    </location>
</feature>
<feature type="active site" description="For beta-ketoacyl synthase activity" evidence="4">
    <location>
        <position position="1313"/>
    </location>
</feature>
<feature type="active site" description="For beta-ketoacyl synthase activity" evidence="4">
    <location>
        <position position="1354"/>
    </location>
</feature>
<feature type="binding site" evidence="1">
    <location>
        <begin position="1552"/>
        <end position="1554"/>
    </location>
    <ligand>
        <name>acetyl-CoA</name>
        <dbReference type="ChEBI" id="CHEBI:57288"/>
    </ligand>
</feature>
<feature type="binding site" evidence="1">
    <location>
        <position position="1552"/>
    </location>
    <ligand>
        <name>Mg(2+)</name>
        <dbReference type="ChEBI" id="CHEBI:18420"/>
    </ligand>
</feature>
<feature type="binding site" evidence="1">
    <location>
        <begin position="1598"/>
        <end position="1608"/>
    </location>
    <ligand>
        <name>acetyl-CoA</name>
        <dbReference type="ChEBI" id="CHEBI:57288"/>
    </ligand>
</feature>
<feature type="binding site" evidence="1">
    <location>
        <begin position="1622"/>
        <end position="1625"/>
    </location>
    <ligand>
        <name>acetyl-CoA</name>
        <dbReference type="ChEBI" id="CHEBI:57288"/>
    </ligand>
</feature>
<feature type="binding site" evidence="1">
    <location>
        <begin position="1652"/>
        <end position="1654"/>
    </location>
    <ligand>
        <name>acetyl-CoA</name>
        <dbReference type="ChEBI" id="CHEBI:57288"/>
    </ligand>
</feature>
<feature type="binding site" evidence="1">
    <location>
        <position position="1653"/>
    </location>
    <ligand>
        <name>Mg(2+)</name>
        <dbReference type="ChEBI" id="CHEBI:18420"/>
    </ligand>
</feature>
<feature type="modified residue" description="O-(pantetheine 4'-phosphoryl)serine" evidence="3">
    <location>
        <position position="113"/>
    </location>
</feature>
<keyword id="KW-0275">Fatty acid biosynthesis</keyword>
<keyword id="KW-0276">Fatty acid metabolism</keyword>
<keyword id="KW-0444">Lipid biosynthesis</keyword>
<keyword id="KW-0443">Lipid metabolism</keyword>
<keyword id="KW-0460">Magnesium</keyword>
<keyword id="KW-0479">Metal-binding</keyword>
<keyword id="KW-0511">Multifunctional enzyme</keyword>
<keyword id="KW-0521">NADP</keyword>
<keyword id="KW-0560">Oxidoreductase</keyword>
<keyword id="KW-0596">Phosphopantetheine</keyword>
<keyword id="KW-0597">Phosphoprotein</keyword>
<keyword id="KW-1185">Reference proteome</keyword>
<keyword id="KW-0808">Transferase</keyword>
<comment type="function">
    <text evidence="9 14 15">Fatty acid synthase alpha subunit; part of the gene cluster that mediates the biosynthesis of aflatoxins, a group of polyketide-derived furanocoumarins, and part of the most toxic and carcinogenic compounds among the known mycotoxins (PubMed:15006741, PubMed:15094053, PubMed:16256699). The four major aflatoxins produced by A.parasiticus are aflatoxin B1 (AFB1), aflatoxin B2 (AFB2), aflatoxin G1 (AFG1) and aflatoxin G2 (AFG2) (PubMed:15006741). Within the aflatoxin pathway, the fungal fatty acid synthase aflA/aflB provides the hexanoyl starter unit to the acyl-carrier protein (ACP) domain of the norsolorinic acid synthase to allow the first step of the pathway (PubMed:15006741, PubMed:16256699). The biosynthesis of aflatoxins begins with the norsolorinic acid synthase aflC that combines a hexanoyl starter unit produced by the fatty acid synthase aflA/aflB and 7 malonyl-CoA extender units to synthesize the precursor NOR. The second step is the conversion of NOR to averantin (AVN) and requires the norsolorinic acid ketoreductase aflD, which catalyzes the dehydration of norsolorinic acid to form (1'S)-averantin. The norsolorinic acid reductases aflE and aflF may also play a role in the conversion of NOR to AVN. The cytochrome P450 monooxygenase aflG then catalyzes the hydroxylation of AVN to 5'hydroxyaverantin (HAVN). The next step is performed by the 5'-hydroxyaverantin dehydrogenase aflH that transforms HAVN to 5'-oxoaverantin (OAVN) which is further converted to averufin (AVF) by aflK that plays a dual role in the pathway, as a 5'-oxoaverantin cyclase that mediates conversion of 5'-oxoaverantin, as well as a versicolorin B synthase in a later step in the pathway. The averufin oxidase aflI catalyzes the conversion of AVF to versiconal hemiacetal acetate (VHA). VHA is then the substrate for the versiconal hemiacetal acetate esterase aflJ to yield versiconal (VAL). Versicolorin B synthase aflK then converts VAL to versicolorin B (VERB) by closing the bisfuran ring of aflatoxin which is required for DNA-binding, thus giving to aflatoxin its activity as a mutagen. Then, the activity of the versicolorin B desaturase aflL leads to versicolorin A (VERA). A branch point starts from VERB since it can also be converted to dihydrodemethylsterigmatocystin (DMDHST), probably also by aflL, VERA being a precursor for aflatoxins B1 and G1, and DMDHST for aflatoxins B2 and G2. Next, the versicolorin reductase aflM and the cytochrome P450 monooxygenase aflN are involved in conversion of VERA to demethylsterigmatocystin (DMST). AflX and aflY seem also involved in this step, through probable aflX-mediated epoxide ring-opening step following versicolorin A oxidation and aflY-mediated Baeyer-Villiger oxidation required for the formation of the xanthone ring. The methyltransferase aflO then leads to the modification of DMST to sterigmatocystin (ST), and of DMDHST to dihydrosterigmatocystin (DHST). Both ST and DHST are then substrates of the O-methyltransferase aflP to yield O-methylsterigmatocystin (OMST) and dihydro-O-methylsterigmatocystin (DHOMST), respectively. Finally OMST is converted to aflatoxins B1 and G1, and DHOMST to aflatoxins B2 and G2, via the action of several enzymes including O-methylsterigmatocystin oxidoreductase aflQ, the cytochrome P450 monooxygenase aflU, but also the NADH-dependent flavin oxidoreductase nadA which is specifically required for the synthesis of AFG1 (PubMed:15006741).</text>
</comment>
<comment type="catalytic activity">
    <reaction evidence="16">
        <text>acetyl-CoA + n malonyl-CoA + 2n NADPH + 4n H(+) = a long-chain-acyl-CoA + n CoA + n CO2 + 2n NADP(+).</text>
        <dbReference type="EC" id="2.3.1.86"/>
    </reaction>
</comment>
<comment type="catalytic activity">
    <reaction evidence="5">
        <text>a fatty acyl-[ACP] + malonyl-[ACP] + H(+) = a 3-oxoacyl-[ACP] + holo-[ACP] + CO2</text>
        <dbReference type="Rhea" id="RHEA:22836"/>
        <dbReference type="Rhea" id="RHEA-COMP:9623"/>
        <dbReference type="Rhea" id="RHEA-COMP:9685"/>
        <dbReference type="Rhea" id="RHEA-COMP:9916"/>
        <dbReference type="Rhea" id="RHEA-COMP:14125"/>
        <dbReference type="ChEBI" id="CHEBI:15378"/>
        <dbReference type="ChEBI" id="CHEBI:16526"/>
        <dbReference type="ChEBI" id="CHEBI:64479"/>
        <dbReference type="ChEBI" id="CHEBI:78449"/>
        <dbReference type="ChEBI" id="CHEBI:78776"/>
        <dbReference type="ChEBI" id="CHEBI:138651"/>
        <dbReference type="EC" id="2.3.1.41"/>
    </reaction>
</comment>
<comment type="catalytic activity">
    <reaction evidence="16">
        <text>a (3R)-hydroxyacyl-[ACP] + NADP(+) = a 3-oxoacyl-[ACP] + NADPH + H(+)</text>
        <dbReference type="Rhea" id="RHEA:17397"/>
        <dbReference type="Rhea" id="RHEA-COMP:9916"/>
        <dbReference type="Rhea" id="RHEA-COMP:9945"/>
        <dbReference type="ChEBI" id="CHEBI:15378"/>
        <dbReference type="ChEBI" id="CHEBI:57783"/>
        <dbReference type="ChEBI" id="CHEBI:58349"/>
        <dbReference type="ChEBI" id="CHEBI:78776"/>
        <dbReference type="ChEBI" id="CHEBI:78827"/>
        <dbReference type="EC" id="1.1.1.100"/>
    </reaction>
</comment>
<comment type="pathway">
    <text evidence="7 8 9">Mycotoxin biosynthesis; aflatoxin biosynthesis.</text>
</comment>
<comment type="subunit">
    <text evidence="1">[Alpha(6)beta(6)] hexamers of two multifunctional subunits (alpha and beta).</text>
</comment>
<comment type="PTM">
    <text>4'-phosphopantetheine is transferred from CoA to a specific serine of the acyl carrier domain by the C-terminal PPT domain. This modification is essential for activity because fatty acids are bound in thioester linkage to the sulfhydryl of the prosthetic group.</text>
</comment>
<comment type="similarity">
    <text evidence="13">Belongs to the thiolase-like superfamily. Fungal fatty acid synthetase subunit alpha family.</text>
</comment>
<comment type="sequence caution" evidence="13">
    <conflict type="erroneous gene model prediction">
        <sequence resource="EMBL-CDS" id="KJK60794"/>
    </conflict>
</comment>
<evidence type="ECO:0000250" key="1">
    <source>
        <dbReference type="UniProtKB" id="P19097"/>
    </source>
</evidence>
<evidence type="ECO:0000255" key="2"/>
<evidence type="ECO:0000255" key="3">
    <source>
        <dbReference type="PROSITE-ProRule" id="PRU00258"/>
    </source>
</evidence>
<evidence type="ECO:0000255" key="4">
    <source>
        <dbReference type="PROSITE-ProRule" id="PRU01348"/>
    </source>
</evidence>
<evidence type="ECO:0000255" key="5">
    <source>
        <dbReference type="PROSITE-ProRule" id="PRU10022"/>
    </source>
</evidence>
<evidence type="ECO:0000256" key="6">
    <source>
        <dbReference type="SAM" id="MobiDB-lite"/>
    </source>
</evidence>
<evidence type="ECO:0000269" key="7">
    <source>
    </source>
</evidence>
<evidence type="ECO:0000269" key="8">
    <source>
    </source>
</evidence>
<evidence type="ECO:0000269" key="9">
    <source>
    </source>
</evidence>
<evidence type="ECO:0000303" key="10">
    <source>
    </source>
</evidence>
<evidence type="ECO:0000303" key="11">
    <source>
    </source>
</evidence>
<evidence type="ECO:0000303" key="12">
    <source>
    </source>
</evidence>
<evidence type="ECO:0000305" key="13"/>
<evidence type="ECO:0000305" key="14">
    <source>
    </source>
</evidence>
<evidence type="ECO:0000305" key="15">
    <source>
    </source>
</evidence>
<evidence type="ECO:0000305" key="16">
    <source>
    </source>
</evidence>
<name>AFLA_ASPPU</name>
<proteinExistence type="inferred from homology"/>
<sequence>MVIQGKRLAASSIQLLASSLDAKKLCYEYDERQAPGVTQITEEAPTEQPPLSTPPSLPQTPNISPISASKIVIDDVALSRVQIVQALVARKLKTAIAQLPTSKSIKELSGGRSSLQNELVGDIHNEFSSIPDAPEQILLRDFGDANPTVQLGKTSSAAVAKLISSKMPSDFNANAIRAHLANKWGLGPLRQTAVLLYAIASEPPSRLASSSAAEEYWDNVSSMYAESCGITLRPRQDTMNEDAMASSAIDPAVVAEFSKGHRRLGVQQFQALAEYLQIDLSGSQASQSDALVAELQQKVDLWTAEMTPEFLAGISPMLDVKKSRRYGSWWNMARQDVLAFYRRPSYSEFVDDALAFKVFLNRLCNRADEALLNMVRSLSCDAYFKQGSLPGYHAASRLLEQAITSTVADCPKARLILPAVGPHTTITKDGTIEYAEAPRQGVSGPTAYIQSLRQGASFIGLKSADVDTQSNLTDALLDAMCLALHNGISFVGKTFLVTGAGQGSIGAGVVRLLLEGGARVLVTTSREPATTSRYFQQMYDNHGAKFSELRVVPCNLASAQDCEGLIRHVYDPRGLNWDLDAILPFAAASDYSTEMHDIRGQSELGHRLMLVNVFRVLGHIVHCKRDAGVDCHPTQVLLPLSPNHGIFGGDGMYPESKLALESLFHRIRSESWSDQLSICGVRIGWTRSTGLMTAHDIIAETVEEHGIRTFSVAEMALNIAMLLTPDFVAHCEDGPLDADFTGSLGTLGSIPGFLAQLHQKVQLAAEVIRAVQAEDEHERFLSPGTKPTLQAPVAPMHPRSSLRVGYPRLPDYEQEIRPLSPRLERLQDPANAVVVVGYSELGPWGSARLRWEIESQGQWTSAGYVELAWLMNLIRHVNDESYVGWVDTQTGKPVRDGEIQALYGDHIDNHTGIRPIQSTSYNPERMEVLQEVAVEEDLPEFEVSQLTADAMRLRHGANVSIRPSGNPDACHVKLKRGAVILVPKTVPFVWGSCAGELPKGWTPAKYGIPENLIHQVDPVTLYTICCVAEAFYSAGITHPLEVFRHIHLSELGNFIGSSMGGPTKTRQLYRDVYFDHEIPSDVLQDTYLNTPAAWVNMLLLGCTGPIKTPVGACATGVESIDSGYESIMAGKTKMCLVGGYDDLQEEASYGFAQLKATVNVEEEIACGRQPSEMSRPMAESRAGFVEAHGCGVQLLCRGDIALQMGLPIYAVIASSAMAADKIGSSVPAPGQGILSFSRERARSSMISVTSRPSSRSSTSSEVSDKSSLTSITSISNPAPRAQRARSTTDMAPLRAALATWGLTIDDLDVASLHGTSTRGNDLNEPEVIETQMRHLGRTPGRPLWAICQKSVTGHPKAPAAAWMLNGCLQVLDSGLVPGNRNLDTLDEALRSASHLCFPTRTVQLREVKAFLLTSFGFGQKGGQVVGVAPKYFFATLPRPEVEGYYRKVRVRTEAGDRAYAAAVMSQAVVKIQTQNPYDEPDAPRIFLDPLARISQDPSTGQYRFRSDATPALDDDALPPPGEPTELVKGISSAWIEEKVRPHMSPGGTVGVDLVPLASFDAYKNAIFVERNYTVRERDWAEKSADVRAAYASRWCAKEAVFKCLQTHSQGAGAAMKEIEIEHGGNGAPKVKLRGAAQTAARQRGLEGVQLSISYGDDAVIAVALGLMSGAS</sequence>
<dbReference type="EC" id="2.3.1.86" evidence="16"/>
<dbReference type="EC" id="1.1.1.100" evidence="16"/>
<dbReference type="EC" id="2.3.1.41" evidence="16"/>
<dbReference type="EMBL" id="AF391094">
    <property type="protein sequence ID" value="AAL99898.1"/>
    <property type="molecule type" value="Genomic_DNA"/>
</dbReference>
<dbReference type="EMBL" id="AY371490">
    <property type="protein sequence ID" value="AAS66002.1"/>
    <property type="molecule type" value="Genomic_DNA"/>
</dbReference>
<dbReference type="EMBL" id="JZEE01000728">
    <property type="protein sequence ID" value="KJK60794.1"/>
    <property type="status" value="ALT_SEQ"/>
    <property type="molecule type" value="Genomic_DNA"/>
</dbReference>
<dbReference type="SMR" id="Q8TGA2"/>
<dbReference type="STRING" id="1403190.Q8TGA2"/>
<dbReference type="OrthoDB" id="4251012at2759"/>
<dbReference type="UniPathway" id="UPA00287"/>
<dbReference type="Proteomes" id="UP000033540">
    <property type="component" value="Unassembled WGS sequence"/>
</dbReference>
<dbReference type="GO" id="GO:0005835">
    <property type="term" value="C:fatty acid synthase complex"/>
    <property type="evidence" value="ECO:0000314"/>
    <property type="project" value="UniProt"/>
</dbReference>
<dbReference type="GO" id="GO:1990234">
    <property type="term" value="C:transferase complex"/>
    <property type="evidence" value="ECO:0000314"/>
    <property type="project" value="UniProt"/>
</dbReference>
<dbReference type="GO" id="GO:0004316">
    <property type="term" value="F:3-oxoacyl-[acyl-carrier-protein] reductase (NADPH) activity"/>
    <property type="evidence" value="ECO:0007669"/>
    <property type="project" value="UniProtKB-EC"/>
</dbReference>
<dbReference type="GO" id="GO:0004315">
    <property type="term" value="F:3-oxoacyl-[acyl-carrier-protein] synthase activity"/>
    <property type="evidence" value="ECO:0007669"/>
    <property type="project" value="UniProtKB-EC"/>
</dbReference>
<dbReference type="GO" id="GO:0004312">
    <property type="term" value="F:fatty acid synthase activity"/>
    <property type="evidence" value="ECO:0007669"/>
    <property type="project" value="InterPro"/>
</dbReference>
<dbReference type="GO" id="GO:0004321">
    <property type="term" value="F:fatty-acyl-CoA synthase activity"/>
    <property type="evidence" value="ECO:0007669"/>
    <property type="project" value="UniProtKB-EC"/>
</dbReference>
<dbReference type="GO" id="GO:0008897">
    <property type="term" value="F:holo-[acyl-carrier-protein] synthase activity"/>
    <property type="evidence" value="ECO:0007669"/>
    <property type="project" value="InterPro"/>
</dbReference>
<dbReference type="GO" id="GO:0000287">
    <property type="term" value="F:magnesium ion binding"/>
    <property type="evidence" value="ECO:0007669"/>
    <property type="project" value="InterPro"/>
</dbReference>
<dbReference type="GO" id="GO:0045122">
    <property type="term" value="P:aflatoxin biosynthetic process"/>
    <property type="evidence" value="ECO:0000304"/>
    <property type="project" value="GO_Central"/>
</dbReference>
<dbReference type="GO" id="GO:0042759">
    <property type="term" value="P:long-chain fatty acid biosynthetic process"/>
    <property type="evidence" value="ECO:0007669"/>
    <property type="project" value="InterPro"/>
</dbReference>
<dbReference type="CDD" id="cd00828">
    <property type="entry name" value="elong_cond_enzymes"/>
    <property type="match status" value="1"/>
</dbReference>
<dbReference type="CDD" id="cd08950">
    <property type="entry name" value="KR_fFAS_SDR_c_like"/>
    <property type="match status" value="1"/>
</dbReference>
<dbReference type="Gene3D" id="3.30.70.2490">
    <property type="match status" value="1"/>
</dbReference>
<dbReference type="Gene3D" id="3.40.47.10">
    <property type="match status" value="1"/>
</dbReference>
<dbReference type="Gene3D" id="6.10.250.1930">
    <property type="match status" value="1"/>
</dbReference>
<dbReference type="Gene3D" id="3.90.470.20">
    <property type="entry name" value="4'-phosphopantetheinyl transferase domain"/>
    <property type="match status" value="1"/>
</dbReference>
<dbReference type="Gene3D" id="3.40.50.720">
    <property type="entry name" value="NAD(P)-binding Rossmann-like Domain"/>
    <property type="match status" value="1"/>
</dbReference>
<dbReference type="InterPro" id="IPR008278">
    <property type="entry name" value="4-PPantetheinyl_Trfase_dom"/>
</dbReference>
<dbReference type="InterPro" id="IPR037143">
    <property type="entry name" value="4-PPantetheinyl_Trfase_dom_sf"/>
</dbReference>
<dbReference type="InterPro" id="IPR040899">
    <property type="entry name" value="Fas_alpha_ACP"/>
</dbReference>
<dbReference type="InterPro" id="IPR047224">
    <property type="entry name" value="FAS_alpha_su_C"/>
</dbReference>
<dbReference type="InterPro" id="IPR026025">
    <property type="entry name" value="FAS_alpha_yeast"/>
</dbReference>
<dbReference type="InterPro" id="IPR041550">
    <property type="entry name" value="FASI_helical"/>
</dbReference>
<dbReference type="InterPro" id="IPR050830">
    <property type="entry name" value="Fungal_FAS"/>
</dbReference>
<dbReference type="InterPro" id="IPR018201">
    <property type="entry name" value="Ketoacyl_synth_AS"/>
</dbReference>
<dbReference type="InterPro" id="IPR014031">
    <property type="entry name" value="Ketoacyl_synth_C"/>
</dbReference>
<dbReference type="InterPro" id="IPR014030">
    <property type="entry name" value="Ketoacyl_synth_N"/>
</dbReference>
<dbReference type="InterPro" id="IPR036291">
    <property type="entry name" value="NAD(P)-bd_dom_sf"/>
</dbReference>
<dbReference type="InterPro" id="IPR020841">
    <property type="entry name" value="PKS_Beta-ketoAc_synthase_dom"/>
</dbReference>
<dbReference type="InterPro" id="IPR013968">
    <property type="entry name" value="PKS_KR"/>
</dbReference>
<dbReference type="InterPro" id="IPR009081">
    <property type="entry name" value="PP-bd_ACP"/>
</dbReference>
<dbReference type="InterPro" id="IPR004568">
    <property type="entry name" value="Ppantetheine-prot_Trfase_dom"/>
</dbReference>
<dbReference type="InterPro" id="IPR016039">
    <property type="entry name" value="Thiolase-like"/>
</dbReference>
<dbReference type="NCBIfam" id="TIGR00556">
    <property type="entry name" value="pantethn_trn"/>
    <property type="match status" value="1"/>
</dbReference>
<dbReference type="PANTHER" id="PTHR10982:SF21">
    <property type="entry name" value="FATTY ACID SYNTHASE SUBUNIT BETA"/>
    <property type="match status" value="1"/>
</dbReference>
<dbReference type="PANTHER" id="PTHR10982">
    <property type="entry name" value="MALONYL COA-ACYL CARRIER PROTEIN TRANSACYLASE"/>
    <property type="match status" value="1"/>
</dbReference>
<dbReference type="Pfam" id="PF01648">
    <property type="entry name" value="ACPS"/>
    <property type="match status" value="1"/>
</dbReference>
<dbReference type="Pfam" id="PF18325">
    <property type="entry name" value="Fas_alpha_ACP"/>
    <property type="match status" value="1"/>
</dbReference>
<dbReference type="Pfam" id="PF18314">
    <property type="entry name" value="FAS_I_H"/>
    <property type="match status" value="1"/>
</dbReference>
<dbReference type="Pfam" id="PF00109">
    <property type="entry name" value="ketoacyl-synt"/>
    <property type="match status" value="1"/>
</dbReference>
<dbReference type="Pfam" id="PF02801">
    <property type="entry name" value="Ketoacyl-synt_C"/>
    <property type="match status" value="1"/>
</dbReference>
<dbReference type="Pfam" id="PF08659">
    <property type="entry name" value="KR"/>
    <property type="match status" value="1"/>
</dbReference>
<dbReference type="PIRSF" id="PIRSF000454">
    <property type="entry name" value="FAS_yeast_alpha"/>
    <property type="match status" value="1"/>
</dbReference>
<dbReference type="SMART" id="SM00825">
    <property type="entry name" value="PKS_KS"/>
    <property type="match status" value="1"/>
</dbReference>
<dbReference type="SUPFAM" id="SSF56214">
    <property type="entry name" value="4'-phosphopantetheinyl transferase"/>
    <property type="match status" value="1"/>
</dbReference>
<dbReference type="SUPFAM" id="SSF51735">
    <property type="entry name" value="NAD(P)-binding Rossmann-fold domains"/>
    <property type="match status" value="1"/>
</dbReference>
<dbReference type="SUPFAM" id="SSF53901">
    <property type="entry name" value="Thiolase-like"/>
    <property type="match status" value="2"/>
</dbReference>
<dbReference type="PROSITE" id="PS50075">
    <property type="entry name" value="CARRIER"/>
    <property type="match status" value="1"/>
</dbReference>
<dbReference type="PROSITE" id="PS00606">
    <property type="entry name" value="KS3_1"/>
    <property type="match status" value="1"/>
</dbReference>
<dbReference type="PROSITE" id="PS52004">
    <property type="entry name" value="KS3_2"/>
    <property type="match status" value="1"/>
</dbReference>
<reference key="1">
    <citation type="journal article" date="2001" name="Bioorg. Chem.">
        <title>Hexanoate synthase, a specialized type I fatty acid synthase in aflatoxin B1 biosynthesis.</title>
        <authorList>
            <person name="Hitchman T.S."/>
            <person name="Schmidt E.W."/>
            <person name="Trail F."/>
            <person name="Rarick M.D."/>
            <person name="Linz J.E."/>
            <person name="Townsend C.A."/>
        </authorList>
    </citation>
    <scope>NUCLEOTIDE SEQUENCE [GENOMIC DNA]</scope>
    <scope>FUNCTION</scope>
    <scope>PATHWAY</scope>
    <source>
        <strain>ATCC 56775 / NRRL 5862 / SRRC 143 / SU-1</strain>
    </source>
</reference>
<reference key="2">
    <citation type="journal article" date="2004" name="Appl. Environ. Microbiol.">
        <title>Clustered pathway genes in aflatoxin biosynthesis.</title>
        <authorList>
            <person name="Yu J."/>
            <person name="Chang P.K."/>
            <person name="Ehrlich K.C."/>
            <person name="Cary J.W."/>
            <person name="Bhatnagar D."/>
            <person name="Cleveland T.E."/>
            <person name="Payne G.A."/>
            <person name="Linz J.E."/>
            <person name="Woloshuk C.P."/>
            <person name="Bennett J.W."/>
        </authorList>
    </citation>
    <scope>NUCLEOTIDE SEQUENCE [GENOMIC DNA]</scope>
    <scope>FUNCTION</scope>
    <scope>PATHWAY</scope>
    <scope>NOMENCLATURE</scope>
    <source>
        <strain>ATCC 56775 / NRRL 5862 / SRRC 143 / SU-1</strain>
    </source>
</reference>
<reference key="3">
    <citation type="journal article" date="2004" name="FEBS Lett.">
        <title>Completed sequence of aflatoxin pathway gene cluster in Aspergillus parasiticus.</title>
        <authorList>
            <person name="Yu J."/>
            <person name="Bhatnagar D."/>
            <person name="Cleveland T.E."/>
        </authorList>
    </citation>
    <scope>NUCLEOTIDE SEQUENCE [GENOMIC DNA]</scope>
    <scope>FUNCTION</scope>
    <scope>PATHWAY</scope>
    <source>
        <strain>ATCC 56775 / NRRL 5862 / SRRC 143 / SU-1</strain>
    </source>
</reference>
<reference key="4">
    <citation type="submission" date="2015-02" db="EMBL/GenBank/DDBJ databases">
        <title>Draft genome sequence of Aspergillus parasiticus SU-1.</title>
        <authorList>
            <person name="Yu J."/>
            <person name="Fedorova N."/>
            <person name="Yin Y."/>
            <person name="Losada L."/>
            <person name="Zafar N."/>
            <person name="Taujale R."/>
            <person name="Ehrlich K.C."/>
            <person name="Bhatnagar D."/>
            <person name="Cleveland T.E."/>
            <person name="Bennett J.W."/>
            <person name="Nierman W.C."/>
        </authorList>
    </citation>
    <scope>NUCLEOTIDE SEQUENCE [LARGE SCALE GENOMIC DNA]</scope>
    <source>
        <strain>ATCC 56775 / NRRL 5862 / SRRC 143 / SU-1</strain>
    </source>
</reference>
<protein>
    <recommendedName>
        <fullName evidence="12">Fatty acid synthase alpha subunit aflA</fullName>
        <ecNumber evidence="16">2.3.1.86</ecNumber>
    </recommendedName>
    <domain>
        <recommendedName>
            <fullName evidence="16">3-oxoacyl-[acyl-carrier-protein] reductase</fullName>
            <ecNumber evidence="16">1.1.1.100</ecNumber>
        </recommendedName>
        <alternativeName>
            <fullName evidence="13">Beta-ketoacyl reductase</fullName>
        </alternativeName>
    </domain>
    <domain>
        <recommendedName>
            <fullName evidence="16">3-oxoacyl-[acyl-carrier-protein] synthase</fullName>
            <ecNumber evidence="16">2.3.1.41</ecNumber>
        </recommendedName>
        <alternativeName>
            <fullName evidence="10">Aflatoxin biosynthesis protein A</fullName>
        </alternativeName>
    </domain>
</protein>